<reference key="1">
    <citation type="journal article" date="2001" name="DNA Res.">
        <title>Complete genome sequence of an aerobic thermoacidophilic Crenarchaeon, Sulfolobus tokodaii strain7.</title>
        <authorList>
            <person name="Kawarabayasi Y."/>
            <person name="Hino Y."/>
            <person name="Horikawa H."/>
            <person name="Jin-no K."/>
            <person name="Takahashi M."/>
            <person name="Sekine M."/>
            <person name="Baba S."/>
            <person name="Ankai A."/>
            <person name="Kosugi H."/>
            <person name="Hosoyama A."/>
            <person name="Fukui S."/>
            <person name="Nagai Y."/>
            <person name="Nishijima K."/>
            <person name="Otsuka R."/>
            <person name="Nakazawa H."/>
            <person name="Takamiya M."/>
            <person name="Kato Y."/>
            <person name="Yoshizawa T."/>
            <person name="Tanaka T."/>
            <person name="Kudoh Y."/>
            <person name="Yamazaki J."/>
            <person name="Kushida N."/>
            <person name="Oguchi A."/>
            <person name="Aoki K."/>
            <person name="Masuda S."/>
            <person name="Yanagii M."/>
            <person name="Nishimura M."/>
            <person name="Yamagishi A."/>
            <person name="Oshima T."/>
            <person name="Kikuchi H."/>
        </authorList>
    </citation>
    <scope>NUCLEOTIDE SEQUENCE [LARGE SCALE GENOMIC DNA]</scope>
    <source>
        <strain>DSM 16993 / JCM 10545 / NBRC 100140 / 7</strain>
    </source>
</reference>
<gene>
    <name evidence="1" type="primary">ctaB</name>
    <name type="ordered locus">STK_15180</name>
</gene>
<organism>
    <name type="scientific">Sulfurisphaera tokodaii (strain DSM 16993 / JCM 10545 / NBRC 100140 / 7)</name>
    <name type="common">Sulfolobus tokodaii</name>
    <dbReference type="NCBI Taxonomy" id="273063"/>
    <lineage>
        <taxon>Archaea</taxon>
        <taxon>Thermoproteota</taxon>
        <taxon>Thermoprotei</taxon>
        <taxon>Sulfolobales</taxon>
        <taxon>Sulfolobaceae</taxon>
        <taxon>Sulfurisphaera</taxon>
    </lineage>
</organism>
<sequence>MKITRIYVRLMAISLSRKLIDYIKLSKPRVISLLDLAAIAGFVLGLPKAINITSIIVSFLAVIIGGSLASGGGMIINGGLEIEKDKKMKRTSWRPTVKGEVGRKEAYAIGSIFIVVGTLIGFLANPLTALFIALGAFIYVVIYSIWLKPRTWWNIVIGGFAGSAAAWAGFAASSGSFTLLSFLLGFLIFMWTPGHFWSLALRFRDDYKNAEIPMLPVLTDERTSAKAIAISNALMVPFALLIGLYAGLIYLIVSTIVSAFLLYVSVKLYLNPTADEAWESFKLSSPYLAIILLTLIIVKLI</sequence>
<proteinExistence type="inferred from homology"/>
<feature type="chain" id="PRO_0000327199" description="Protoheme IX farnesyltransferase">
    <location>
        <begin position="1"/>
        <end position="301"/>
    </location>
</feature>
<feature type="transmembrane region" description="Helical" evidence="1">
    <location>
        <begin position="30"/>
        <end position="50"/>
    </location>
</feature>
<feature type="transmembrane region" description="Helical" evidence="1">
    <location>
        <begin position="55"/>
        <end position="75"/>
    </location>
</feature>
<feature type="transmembrane region" description="Helical" evidence="1">
    <location>
        <begin position="106"/>
        <end position="126"/>
    </location>
</feature>
<feature type="transmembrane region" description="Helical" evidence="1">
    <location>
        <begin position="127"/>
        <end position="147"/>
    </location>
</feature>
<feature type="transmembrane region" description="Helical" evidence="1">
    <location>
        <begin position="152"/>
        <end position="172"/>
    </location>
</feature>
<feature type="transmembrane region" description="Helical" evidence="1">
    <location>
        <begin position="177"/>
        <end position="197"/>
    </location>
</feature>
<feature type="transmembrane region" description="Helical" evidence="1">
    <location>
        <begin position="233"/>
        <end position="253"/>
    </location>
</feature>
<feature type="transmembrane region" description="Helical" evidence="1">
    <location>
        <begin position="281"/>
        <end position="301"/>
    </location>
</feature>
<protein>
    <recommendedName>
        <fullName evidence="1">Protoheme IX farnesyltransferase</fullName>
        <ecNumber evidence="1">2.5.1.141</ecNumber>
    </recommendedName>
    <alternativeName>
        <fullName evidence="1">Heme B farnesyltransferase</fullName>
    </alternativeName>
    <alternativeName>
        <fullName evidence="1">Heme O synthase</fullName>
    </alternativeName>
</protein>
<evidence type="ECO:0000255" key="1">
    <source>
        <dbReference type="HAMAP-Rule" id="MF_00154"/>
    </source>
</evidence>
<comment type="function">
    <text evidence="1">Converts heme B (protoheme IX) to heme O by substitution of the vinyl group on carbon 2 of heme B porphyrin ring with a hydroxyethyl farnesyl side group.</text>
</comment>
<comment type="catalytic activity">
    <reaction evidence="1">
        <text>heme b + (2E,6E)-farnesyl diphosphate + H2O = Fe(II)-heme o + diphosphate</text>
        <dbReference type="Rhea" id="RHEA:28070"/>
        <dbReference type="ChEBI" id="CHEBI:15377"/>
        <dbReference type="ChEBI" id="CHEBI:33019"/>
        <dbReference type="ChEBI" id="CHEBI:60344"/>
        <dbReference type="ChEBI" id="CHEBI:60530"/>
        <dbReference type="ChEBI" id="CHEBI:175763"/>
        <dbReference type="EC" id="2.5.1.141"/>
    </reaction>
</comment>
<comment type="pathway">
    <text evidence="1">Porphyrin-containing compound metabolism; heme O biosynthesis; heme O from protoheme: step 1/1.</text>
</comment>
<comment type="subcellular location">
    <subcellularLocation>
        <location evidence="1">Cell membrane</location>
        <topology evidence="1">Multi-pass membrane protein</topology>
    </subcellularLocation>
</comment>
<comment type="miscellaneous">
    <text evidence="1">Carbon 2 of the heme B porphyrin ring is defined according to the Fischer nomenclature.</text>
</comment>
<comment type="similarity">
    <text evidence="1">Belongs to the UbiA prenyltransferase family. Protoheme IX farnesyltransferase subfamily.</text>
</comment>
<accession>Q970T4</accession>
<accession>F9VNG4</accession>
<keyword id="KW-1003">Cell membrane</keyword>
<keyword id="KW-0350">Heme biosynthesis</keyword>
<keyword id="KW-0472">Membrane</keyword>
<keyword id="KW-1185">Reference proteome</keyword>
<keyword id="KW-0808">Transferase</keyword>
<keyword id="KW-0812">Transmembrane</keyword>
<keyword id="KW-1133">Transmembrane helix</keyword>
<dbReference type="EC" id="2.5.1.141" evidence="1"/>
<dbReference type="EMBL" id="BA000023">
    <property type="protein sequence ID" value="BAK54610.1"/>
    <property type="molecule type" value="Genomic_DNA"/>
</dbReference>
<dbReference type="SMR" id="Q970T4"/>
<dbReference type="STRING" id="273063.STK_15180"/>
<dbReference type="KEGG" id="sto:STK_15180"/>
<dbReference type="PATRIC" id="fig|273063.9.peg.1725"/>
<dbReference type="eggNOG" id="arCOG00479">
    <property type="taxonomic scope" value="Archaea"/>
</dbReference>
<dbReference type="UniPathway" id="UPA00834">
    <property type="reaction ID" value="UER00712"/>
</dbReference>
<dbReference type="Proteomes" id="UP000001015">
    <property type="component" value="Chromosome"/>
</dbReference>
<dbReference type="GO" id="GO:0005886">
    <property type="term" value="C:plasma membrane"/>
    <property type="evidence" value="ECO:0007669"/>
    <property type="project" value="UniProtKB-SubCell"/>
</dbReference>
<dbReference type="GO" id="GO:0008495">
    <property type="term" value="F:protoheme IX farnesyltransferase activity"/>
    <property type="evidence" value="ECO:0007669"/>
    <property type="project" value="UniProtKB-UniRule"/>
</dbReference>
<dbReference type="GO" id="GO:0048034">
    <property type="term" value="P:heme O biosynthetic process"/>
    <property type="evidence" value="ECO:0007669"/>
    <property type="project" value="UniProtKB-UniRule"/>
</dbReference>
<dbReference type="CDD" id="cd13957">
    <property type="entry name" value="PT_UbiA_Cox10"/>
    <property type="match status" value="1"/>
</dbReference>
<dbReference type="Gene3D" id="1.10.357.140">
    <property type="entry name" value="UbiA prenyltransferase"/>
    <property type="match status" value="1"/>
</dbReference>
<dbReference type="HAMAP" id="MF_00154">
    <property type="entry name" value="CyoE_CtaB"/>
    <property type="match status" value="1"/>
</dbReference>
<dbReference type="InterPro" id="IPR006369">
    <property type="entry name" value="Protohaem_IX_farnesylTrfase"/>
</dbReference>
<dbReference type="InterPro" id="IPR000537">
    <property type="entry name" value="UbiA_prenyltransferase"/>
</dbReference>
<dbReference type="InterPro" id="IPR044878">
    <property type="entry name" value="UbiA_sf"/>
</dbReference>
<dbReference type="NCBIfam" id="TIGR01473">
    <property type="entry name" value="cyoE_ctaB"/>
    <property type="match status" value="1"/>
</dbReference>
<dbReference type="PANTHER" id="PTHR43448">
    <property type="entry name" value="PROTOHEME IX FARNESYLTRANSFERASE, MITOCHONDRIAL"/>
    <property type="match status" value="1"/>
</dbReference>
<dbReference type="PANTHER" id="PTHR43448:SF2">
    <property type="entry name" value="PROTOHEME IX FARNESYLTRANSFERASE, MITOCHONDRIAL"/>
    <property type="match status" value="1"/>
</dbReference>
<dbReference type="Pfam" id="PF01040">
    <property type="entry name" value="UbiA"/>
    <property type="match status" value="1"/>
</dbReference>
<name>COXX_SULTO</name>